<evidence type="ECO:0000250" key="1"/>
<evidence type="ECO:0000250" key="2">
    <source>
        <dbReference type="UniProtKB" id="O88941"/>
    </source>
</evidence>
<evidence type="ECO:0000250" key="3">
    <source>
        <dbReference type="UniProtKB" id="Q13724"/>
    </source>
</evidence>
<evidence type="ECO:0000255" key="4"/>
<evidence type="ECO:0000256" key="5">
    <source>
        <dbReference type="SAM" id="MobiDB-lite"/>
    </source>
</evidence>
<evidence type="ECO:0000269" key="6">
    <source>
    </source>
</evidence>
<evidence type="ECO:0000303" key="7">
    <source>
    </source>
</evidence>
<evidence type="ECO:0000305" key="8"/>
<evidence type="ECO:0000305" key="9">
    <source>
    </source>
</evidence>
<evidence type="ECO:0000305" key="10">
    <source>
    </source>
</evidence>
<evidence type="ECO:0000312" key="11">
    <source>
        <dbReference type="EMBL" id="AAD00906.1"/>
    </source>
</evidence>
<evidence type="ECO:0000312" key="12">
    <source>
        <dbReference type="EMBL" id="AAH51949.1"/>
    </source>
</evidence>
<evidence type="ECO:0000312" key="13">
    <source>
        <dbReference type="MGI" id="MGI:1929872"/>
    </source>
</evidence>
<evidence type="ECO:0007744" key="14">
    <source>
        <dbReference type="PDB" id="5MHF"/>
    </source>
</evidence>
<evidence type="ECO:0007829" key="15">
    <source>
        <dbReference type="PDB" id="5MHF"/>
    </source>
</evidence>
<dbReference type="EC" id="3.2.1.106" evidence="3"/>
<dbReference type="EMBL" id="AF001797">
    <property type="protein sequence ID" value="AAD00906.1"/>
    <property type="molecule type" value="Genomic_DNA"/>
</dbReference>
<dbReference type="EMBL" id="BC051949">
    <property type="protein sequence ID" value="AAH51949.1"/>
    <property type="molecule type" value="mRNA"/>
</dbReference>
<dbReference type="CCDS" id="CCDS20273.1"/>
<dbReference type="RefSeq" id="NP_065644.2">
    <property type="nucleotide sequence ID" value="NM_020619.2"/>
</dbReference>
<dbReference type="PDB" id="5MHF">
    <property type="method" value="X-ray"/>
    <property type="resolution" value="2.10 A"/>
    <property type="chains" value="A/B/C/D=59-834"/>
</dbReference>
<dbReference type="PDBsum" id="5MHF"/>
<dbReference type="SMR" id="Q80UM7"/>
<dbReference type="BioGRID" id="208276">
    <property type="interactions" value="9"/>
</dbReference>
<dbReference type="FunCoup" id="Q80UM7">
    <property type="interactions" value="1978"/>
</dbReference>
<dbReference type="IntAct" id="Q80UM7">
    <property type="interactions" value="3"/>
</dbReference>
<dbReference type="STRING" id="10090.ENSMUSP00000032114"/>
<dbReference type="ChEMBL" id="CHEMBL4523366"/>
<dbReference type="CAZy" id="GH63">
    <property type="family name" value="Glycoside Hydrolase Family 63"/>
</dbReference>
<dbReference type="GlyCosmos" id="Q80UM7">
    <property type="glycosylation" value="1 site, No reported glycans"/>
</dbReference>
<dbReference type="GlyGen" id="Q80UM7">
    <property type="glycosylation" value="3 sites, 1 O-linked glycan (1 site)"/>
</dbReference>
<dbReference type="iPTMnet" id="Q80UM7"/>
<dbReference type="PhosphoSitePlus" id="Q80UM7"/>
<dbReference type="SwissPalm" id="Q80UM7"/>
<dbReference type="jPOST" id="Q80UM7"/>
<dbReference type="PaxDb" id="10090-ENSMUSP00000032114"/>
<dbReference type="ProteomicsDB" id="295578"/>
<dbReference type="Pumba" id="Q80UM7"/>
<dbReference type="Antibodypedia" id="2372">
    <property type="antibodies" value="183 antibodies from 25 providers"/>
</dbReference>
<dbReference type="DNASU" id="57377"/>
<dbReference type="Ensembl" id="ENSMUST00000032114.8">
    <property type="protein sequence ID" value="ENSMUSP00000032114.8"/>
    <property type="gene ID" value="ENSMUSG00000030036.9"/>
</dbReference>
<dbReference type="GeneID" id="57377"/>
<dbReference type="KEGG" id="mmu:57377"/>
<dbReference type="UCSC" id="uc009cmn.1">
    <property type="organism name" value="mouse"/>
</dbReference>
<dbReference type="AGR" id="MGI:1929872"/>
<dbReference type="CTD" id="7841"/>
<dbReference type="MGI" id="MGI:1929872">
    <property type="gene designation" value="Mogs"/>
</dbReference>
<dbReference type="VEuPathDB" id="HostDB:ENSMUSG00000030036"/>
<dbReference type="eggNOG" id="KOG2161">
    <property type="taxonomic scope" value="Eukaryota"/>
</dbReference>
<dbReference type="GeneTree" id="ENSGT00390000017452"/>
<dbReference type="HOGENOM" id="CLU_007380_1_0_1"/>
<dbReference type="InParanoid" id="Q80UM7"/>
<dbReference type="OMA" id="FNWYNTT"/>
<dbReference type="OrthoDB" id="410058at2759"/>
<dbReference type="PhylomeDB" id="Q80UM7"/>
<dbReference type="TreeFam" id="TF300749"/>
<dbReference type="UniPathway" id="UPA00280"/>
<dbReference type="BioGRID-ORCS" id="57377">
    <property type="hits" value="28 hits in 83 CRISPR screens"/>
</dbReference>
<dbReference type="CD-CODE" id="CE726F99">
    <property type="entry name" value="Postsynaptic density"/>
</dbReference>
<dbReference type="ChiTaRS" id="Mogs">
    <property type="organism name" value="mouse"/>
</dbReference>
<dbReference type="PRO" id="PR:Q80UM7"/>
<dbReference type="Proteomes" id="UP000000589">
    <property type="component" value="Chromosome 6"/>
</dbReference>
<dbReference type="RNAct" id="Q80UM7">
    <property type="molecule type" value="protein"/>
</dbReference>
<dbReference type="Bgee" id="ENSMUSG00000030036">
    <property type="expression patterns" value="Expressed in primitive streak and 266 other cell types or tissues"/>
</dbReference>
<dbReference type="GO" id="GO:0005789">
    <property type="term" value="C:endoplasmic reticulum membrane"/>
    <property type="evidence" value="ECO:0007669"/>
    <property type="project" value="UniProtKB-SubCell"/>
</dbReference>
<dbReference type="GO" id="GO:0004573">
    <property type="term" value="F:Glc3Man9GlcNAc2 oligosaccharide glucosidase activity"/>
    <property type="evidence" value="ECO:0007669"/>
    <property type="project" value="UniProtKB-EC"/>
</dbReference>
<dbReference type="GO" id="GO:0009311">
    <property type="term" value="P:oligosaccharide metabolic process"/>
    <property type="evidence" value="ECO:0007669"/>
    <property type="project" value="InterPro"/>
</dbReference>
<dbReference type="FunFam" id="2.70.98.110:FF:000001">
    <property type="entry name" value="Mannosyl-oligosaccharide glucosidase"/>
    <property type="match status" value="1"/>
</dbReference>
<dbReference type="FunFam" id="1.50.10.10:FF:000009">
    <property type="entry name" value="mannosyl-oligosaccharide glucosidase"/>
    <property type="match status" value="1"/>
</dbReference>
<dbReference type="Gene3D" id="1.50.10.10">
    <property type="match status" value="1"/>
</dbReference>
<dbReference type="Gene3D" id="2.70.98.110">
    <property type="entry name" value="Glycosyl hydrolase family 63, N-terminal domain"/>
    <property type="match status" value="1"/>
</dbReference>
<dbReference type="InterPro" id="IPR008928">
    <property type="entry name" value="6-hairpin_glycosidase_sf"/>
</dbReference>
<dbReference type="InterPro" id="IPR012341">
    <property type="entry name" value="6hp_glycosidase-like_sf"/>
</dbReference>
<dbReference type="InterPro" id="IPR031335">
    <property type="entry name" value="Glyco_hydro_63_C"/>
</dbReference>
<dbReference type="InterPro" id="IPR031631">
    <property type="entry name" value="Glyco_hydro_63N"/>
</dbReference>
<dbReference type="InterPro" id="IPR038518">
    <property type="entry name" value="Glyco_hydro_63N_sf"/>
</dbReference>
<dbReference type="InterPro" id="IPR004888">
    <property type="entry name" value="Glycoside_hydrolase_63"/>
</dbReference>
<dbReference type="PANTHER" id="PTHR10412">
    <property type="entry name" value="MANNOSYL-OLIGOSACCHARIDE GLUCOSIDASE"/>
    <property type="match status" value="1"/>
</dbReference>
<dbReference type="PANTHER" id="PTHR10412:SF11">
    <property type="entry name" value="MANNOSYL-OLIGOSACCHARIDE GLUCOSIDASE"/>
    <property type="match status" value="1"/>
</dbReference>
<dbReference type="Pfam" id="PF03200">
    <property type="entry name" value="Glyco_hydro_63"/>
    <property type="match status" value="1"/>
</dbReference>
<dbReference type="Pfam" id="PF16923">
    <property type="entry name" value="Glyco_hydro_63N"/>
    <property type="match status" value="1"/>
</dbReference>
<dbReference type="SUPFAM" id="SSF48208">
    <property type="entry name" value="Six-hairpin glycosidases"/>
    <property type="match status" value="1"/>
</dbReference>
<feature type="chain" id="PRO_0000057711" description="Mannosyl-oligosaccharide glucosidase">
    <location>
        <begin position="1"/>
        <end position="834"/>
    </location>
</feature>
<feature type="topological domain" description="Cytoplasmic" evidence="4">
    <location>
        <begin position="1"/>
        <end position="43"/>
    </location>
</feature>
<feature type="transmembrane region" description="Helical; Signal-anchor for type II membrane protein" evidence="4">
    <location>
        <begin position="44"/>
        <end position="64"/>
    </location>
</feature>
<feature type="topological domain" description="Lumenal" evidence="4">
    <location>
        <begin position="65"/>
        <end position="834"/>
    </location>
</feature>
<feature type="region of interest" description="Disordered" evidence="5">
    <location>
        <begin position="1"/>
        <end position="37"/>
    </location>
</feature>
<feature type="region of interest" description="Required for endoplasmic reticulum targeting" evidence="1">
    <location>
        <begin position="74"/>
        <end position="136"/>
    </location>
</feature>
<feature type="short sequence motif" description="Endoplasmic reticulum targeting">
    <location>
        <begin position="3"/>
        <end position="9"/>
    </location>
</feature>
<feature type="compositionally biased region" description="Basic residues" evidence="5">
    <location>
        <begin position="1"/>
        <end position="10"/>
    </location>
</feature>
<feature type="compositionally biased region" description="Basic and acidic residues" evidence="5">
    <location>
        <begin position="17"/>
        <end position="31"/>
    </location>
</feature>
<feature type="active site" description="Proton donor" evidence="10">
    <location>
        <position position="580"/>
    </location>
</feature>
<feature type="active site" description="Proton acceptor" evidence="10">
    <location>
        <position position="804"/>
    </location>
</feature>
<feature type="glycosylation site" description="N-linked (GlcNAc...) asparagine" evidence="3">
    <location>
        <position position="654"/>
    </location>
</feature>
<feature type="sequence conflict" description="In Ref. 1; AAD00906." evidence="8" ref="1">
    <original>G</original>
    <variation>S</variation>
    <location>
        <position position="749"/>
    </location>
</feature>
<feature type="helix" evidence="15">
    <location>
        <begin position="63"/>
        <end position="69"/>
    </location>
</feature>
<feature type="turn" evidence="15">
    <location>
        <begin position="81"/>
        <end position="84"/>
    </location>
</feature>
<feature type="turn" evidence="15">
    <location>
        <begin position="86"/>
        <end position="88"/>
    </location>
</feature>
<feature type="helix" evidence="15">
    <location>
        <begin position="90"/>
        <end position="92"/>
    </location>
</feature>
<feature type="strand" evidence="15">
    <location>
        <begin position="93"/>
        <end position="95"/>
    </location>
</feature>
<feature type="strand" evidence="15">
    <location>
        <begin position="101"/>
        <end position="109"/>
    </location>
</feature>
<feature type="strand" evidence="15">
    <location>
        <begin position="114"/>
        <end position="123"/>
    </location>
</feature>
<feature type="strand" evidence="15">
    <location>
        <begin position="144"/>
        <end position="150"/>
    </location>
</feature>
<feature type="strand" evidence="15">
    <location>
        <begin position="152"/>
        <end position="162"/>
    </location>
</feature>
<feature type="strand" evidence="15">
    <location>
        <begin position="165"/>
        <end position="174"/>
    </location>
</feature>
<feature type="turn" evidence="15">
    <location>
        <begin position="177"/>
        <end position="180"/>
    </location>
</feature>
<feature type="strand" evidence="15">
    <location>
        <begin position="182"/>
        <end position="191"/>
    </location>
</feature>
<feature type="strand" evidence="15">
    <location>
        <begin position="201"/>
        <end position="209"/>
    </location>
</feature>
<feature type="strand" evidence="15">
    <location>
        <begin position="228"/>
        <end position="233"/>
    </location>
</feature>
<feature type="turn" evidence="15">
    <location>
        <begin position="234"/>
        <end position="236"/>
    </location>
</feature>
<feature type="strand" evidence="15">
    <location>
        <begin position="237"/>
        <end position="243"/>
    </location>
</feature>
<feature type="strand" evidence="15">
    <location>
        <begin position="258"/>
        <end position="265"/>
    </location>
</feature>
<feature type="helix" evidence="15">
    <location>
        <begin position="269"/>
        <end position="271"/>
    </location>
</feature>
<feature type="helix" evidence="15">
    <location>
        <begin position="272"/>
        <end position="279"/>
    </location>
</feature>
<feature type="strand" evidence="15">
    <location>
        <begin position="282"/>
        <end position="286"/>
    </location>
</feature>
<feature type="strand" evidence="15">
    <location>
        <begin position="294"/>
        <end position="299"/>
    </location>
</feature>
<feature type="strand" evidence="15">
    <location>
        <begin position="315"/>
        <end position="335"/>
    </location>
</feature>
<feature type="turn" evidence="15">
    <location>
        <begin position="336"/>
        <end position="338"/>
    </location>
</feature>
<feature type="helix" evidence="15">
    <location>
        <begin position="342"/>
        <end position="345"/>
    </location>
</feature>
<feature type="helix" evidence="15">
    <location>
        <begin position="351"/>
        <end position="365"/>
    </location>
</feature>
<feature type="turn" evidence="15">
    <location>
        <begin position="368"/>
        <end position="370"/>
    </location>
</feature>
<feature type="helix" evidence="15">
    <location>
        <begin position="382"/>
        <end position="397"/>
    </location>
</feature>
<feature type="strand" evidence="15">
    <location>
        <begin position="400"/>
        <end position="404"/>
    </location>
</feature>
<feature type="strand" evidence="15">
    <location>
        <begin position="407"/>
        <end position="409"/>
    </location>
</feature>
<feature type="strand" evidence="15">
    <location>
        <begin position="429"/>
        <end position="433"/>
    </location>
</feature>
<feature type="helix" evidence="15">
    <location>
        <begin position="446"/>
        <end position="459"/>
    </location>
</feature>
<feature type="helix" evidence="15">
    <location>
        <begin position="461"/>
        <end position="472"/>
    </location>
</feature>
<feature type="strand" evidence="15">
    <location>
        <begin position="483"/>
        <end position="485"/>
    </location>
</feature>
<feature type="helix" evidence="15">
    <location>
        <begin position="489"/>
        <end position="492"/>
    </location>
</feature>
<feature type="helix" evidence="15">
    <location>
        <begin position="497"/>
        <end position="499"/>
    </location>
</feature>
<feature type="helix" evidence="15">
    <location>
        <begin position="513"/>
        <end position="522"/>
    </location>
</feature>
<feature type="helix" evidence="15">
    <location>
        <begin position="525"/>
        <end position="532"/>
    </location>
</feature>
<feature type="helix" evidence="15">
    <location>
        <begin position="535"/>
        <end position="548"/>
    </location>
</feature>
<feature type="helix" evidence="15">
    <location>
        <begin position="575"/>
        <end position="577"/>
    </location>
</feature>
<feature type="helix" evidence="15">
    <location>
        <begin position="595"/>
        <end position="615"/>
    </location>
</feature>
<feature type="helix" evidence="15">
    <location>
        <begin position="618"/>
        <end position="632"/>
    </location>
</feature>
<feature type="helix" evidence="15">
    <location>
        <begin position="634"/>
        <end position="641"/>
    </location>
</feature>
<feature type="turn" evidence="15">
    <location>
        <begin position="644"/>
        <end position="647"/>
    </location>
</feature>
<feature type="strand" evidence="15">
    <location>
        <begin position="652"/>
        <end position="655"/>
    </location>
</feature>
<feature type="strand" evidence="15">
    <location>
        <begin position="659"/>
        <end position="664"/>
    </location>
</feature>
<feature type="turn" evidence="15">
    <location>
        <begin position="665"/>
        <end position="667"/>
    </location>
</feature>
<feature type="strand" evidence="15">
    <location>
        <begin position="668"/>
        <end position="673"/>
    </location>
</feature>
<feature type="strand" evidence="15">
    <location>
        <begin position="679"/>
        <end position="682"/>
    </location>
</feature>
<feature type="helix" evidence="15">
    <location>
        <begin position="689"/>
        <end position="691"/>
    </location>
</feature>
<feature type="helix" evidence="15">
    <location>
        <begin position="692"/>
        <end position="695"/>
    </location>
</feature>
<feature type="helix" evidence="15">
    <location>
        <begin position="706"/>
        <end position="714"/>
    </location>
</feature>
<feature type="turn" evidence="15">
    <location>
        <begin position="716"/>
        <end position="719"/>
    </location>
</feature>
<feature type="strand" evidence="15">
    <location>
        <begin position="724"/>
        <end position="728"/>
    </location>
</feature>
<feature type="strand" evidence="15">
    <location>
        <begin position="746"/>
        <end position="749"/>
    </location>
</feature>
<feature type="helix" evidence="15">
    <location>
        <begin position="753"/>
        <end position="766"/>
    </location>
</feature>
<feature type="helix" evidence="15">
    <location>
        <begin position="774"/>
        <end position="778"/>
    </location>
</feature>
<feature type="helix" evidence="15">
    <location>
        <begin position="781"/>
        <end position="799"/>
    </location>
</feature>
<feature type="strand" evidence="15">
    <location>
        <begin position="804"/>
        <end position="806"/>
    </location>
</feature>
<feature type="turn" evidence="15">
    <location>
        <begin position="808"/>
        <end position="810"/>
    </location>
</feature>
<feature type="strand" evidence="15">
    <location>
        <begin position="813"/>
        <end position="818"/>
    </location>
</feature>
<feature type="helix" evidence="15">
    <location>
        <begin position="822"/>
        <end position="825"/>
    </location>
</feature>
<feature type="helix" evidence="15">
    <location>
        <begin position="826"/>
        <end position="831"/>
    </location>
</feature>
<protein>
    <recommendedName>
        <fullName evidence="8">Mannosyl-oligosaccharide glucosidase</fullName>
        <ecNumber evidence="3">3.2.1.106</ecNumber>
    </recommendedName>
    <alternativeName>
        <fullName evidence="7">Endoplasmic reticulum alpha-glucosidase I</fullName>
        <shortName evidence="7">ER glu I</shortName>
    </alternativeName>
    <alternativeName>
        <fullName>Glucosidase 1</fullName>
    </alternativeName>
    <alternativeName>
        <fullName evidence="9">Glycoprotein-processing glucosidase I</fullName>
    </alternativeName>
</protein>
<proteinExistence type="evidence at protein level"/>
<comment type="function">
    <text evidence="3">In the context of N-glycan degradation, cleaves the distal alpha 1,2-linked glucose residue from the Glc(3)Man(9)GlcNAc(2) oligosaccharide precursor in a highly specific manner.</text>
</comment>
<comment type="function">
    <text evidence="6">(Microbial infection) Required for successful influenza or dengue virus infection; inhibition of its activity by a deoxynojirimycin derivative prevents death in mice infected with lethal doses of influenza or dengue viruses, even when administrated after infection.</text>
</comment>
<comment type="catalytic activity">
    <reaction evidence="3">
        <text>N(4)-(alpha-D-Glc-(1-&gt;2)-alpha-D-Glc-(1-&gt;3)-alpha-D-Glc-(1-&gt;3)-alpha-D-Man-(1-&gt;2)-alpha-D-Man-(1-&gt;2)-alpha-D-Man-(1-&gt;3)-[alpha-D-Man-(1-&gt;2)-alpha-D-Man-(1-&gt;3)-[alpha-D-Man-(1-&gt;2)-alpha-D-Man-(1-&gt;6)]-alpha-D-Man-(1-&gt;6)]-beta-D-Man-(1-&gt;4)-beta-D-GlcNAc-(1-&gt;4)-beta-D-GlcNAc)-L-asparaginyl-[protein] + H2O = N(4)-(alpha-D-Glc-(1-&gt;3)-alpha-D-Glc-(1-&gt;3)-alpha-D-Man-(1-&gt;2)-alpha-D-Man-(1-&gt;2)-alpha-D-Man-(1-&gt;3)-[alpha-D-Man-(1-&gt;2)-alpha-D-Man-(1-&gt;3)-[alpha-D-Man-(1-&gt;2)-alpha-D-Man-(1-&gt;6)]-alpha-D-Man-(1-&gt;6)]-beta-D-Man-(1-&gt;4)-beta-D-GlcNAc-(1-&gt;4)-beta-D-GlcNAc)-L-asparaginyl-[protein] + beta-D-glucose</text>
        <dbReference type="Rhea" id="RHEA:55988"/>
        <dbReference type="Rhea" id="RHEA-COMP:12806"/>
        <dbReference type="Rhea" id="RHEA-COMP:14355"/>
        <dbReference type="ChEBI" id="CHEBI:15377"/>
        <dbReference type="ChEBI" id="CHEBI:15903"/>
        <dbReference type="ChEBI" id="CHEBI:59082"/>
        <dbReference type="ChEBI" id="CHEBI:132537"/>
        <dbReference type="EC" id="3.2.1.106"/>
    </reaction>
    <physiologicalReaction direction="left-to-right" evidence="3">
        <dbReference type="Rhea" id="RHEA:55989"/>
    </physiologicalReaction>
</comment>
<comment type="activity regulation">
    <text evidence="6">Inhibited by the deoxynojirimycin derivative N-9'-Methoxynonyl-1-Deoxynojirimycin.</text>
</comment>
<comment type="pathway">
    <text evidence="3">Glycan metabolism; N-glycan degradation.</text>
</comment>
<comment type="subcellular location">
    <subcellularLocation>
        <location evidence="3">Endoplasmic reticulum membrane</location>
        <topology evidence="2">Single-pass type II membrane protein</topology>
    </subcellularLocation>
</comment>
<comment type="similarity">
    <text evidence="8">Belongs to the glycosyl hydrolase 63 family.</text>
</comment>
<gene>
    <name evidence="13" type="primary">Mogs</name>
    <name evidence="13" type="synonym">Gcs1</name>
</gene>
<sequence length="834" mass="91831">MARGERRRRAAAAEGARPLERARAAGRRDGRAGGARGSASGAALAVVVLALAFGLSGRWVLAWLRVRRALTLHPAPSALPPDSSSPAVAPELFWGTYRPHVYFGMKTRSPKPLLTGLMWAQQGATPGTPPKLRHTCEQGDGVGPYGWEFHDGRTFGRQHIHDGALRLTTEFVKRPGGQHGGDWSWRVTVEPQASGTPSFPLVSLFFYVVTDGQEVLLPEIGAKGQLKSISGHTSELGDFRLTLLPPTSPGDTVPKHGSYNVFWSSNPGLPQLTDMVKSRLNSWFQHRPPGASPDRYLGLPGSLKWEERGPSGQGQFLIQQVTLKAPFSVEFVFESGSAATGGNQASGRLVGSQLTQALESHAAAFKERFEKTFQLKEKGLSPEEQALGQVALSGLLGGIGYFYGQGLVLPDTSMEGSEQKMDPALFPPVPLFSGVPSRSFFPRGFLWDEGFHQLVVQRWDPHLTREALGHWLGLLNADGWIGREQILGDEARARVPPEFLVQRAAHANPPTLLLPVVHMLEGHDPDDLAFLRKAFPRLHAWFSWLHQSQAGPVPLSYRWRGRDLALPTLLNPKTLPSGLDDYPRASHPSTAERHLDLRCWVALGARVLSQLAEQLGETEAAAELGPLAASLEEPGSLDELHWAPELGVFADFGNHTKAVQLKSRPPQGLVRVVGRPPPRLQYVDALGYVSLFPLLLQLLDPSSPRLGPLLDVLADSRHLWSPFGLRSLSASSLFYKQRNTEHDPPYWRGAVWLNINYLALGALHHYGHVEGPHKVQAAKLYHELRANVVRNVRQQYQATGFLWEQYSDQDGRGMGCRPFQGWTSLVLLIMAEEY</sequence>
<name>MOGS_MOUSE</name>
<organism>
    <name type="scientific">Mus musculus</name>
    <name type="common">Mouse</name>
    <dbReference type="NCBI Taxonomy" id="10090"/>
    <lineage>
        <taxon>Eukaryota</taxon>
        <taxon>Metazoa</taxon>
        <taxon>Chordata</taxon>
        <taxon>Craniata</taxon>
        <taxon>Vertebrata</taxon>
        <taxon>Euteleostomi</taxon>
        <taxon>Mammalia</taxon>
        <taxon>Eutheria</taxon>
        <taxon>Euarchontoglires</taxon>
        <taxon>Glires</taxon>
        <taxon>Rodentia</taxon>
        <taxon>Myomorpha</taxon>
        <taxon>Muroidea</taxon>
        <taxon>Muridae</taxon>
        <taxon>Murinae</taxon>
        <taxon>Mus</taxon>
        <taxon>Mus</taxon>
    </lineage>
</organism>
<accession>Q80UM7</accession>
<accession>Q9Z2W5</accession>
<keyword id="KW-0002">3D-structure</keyword>
<keyword id="KW-0256">Endoplasmic reticulum</keyword>
<keyword id="KW-0325">Glycoprotein</keyword>
<keyword id="KW-0326">Glycosidase</keyword>
<keyword id="KW-0378">Hydrolase</keyword>
<keyword id="KW-0472">Membrane</keyword>
<keyword id="KW-1185">Reference proteome</keyword>
<keyword id="KW-0735">Signal-anchor</keyword>
<keyword id="KW-0812">Transmembrane</keyword>
<keyword id="KW-1133">Transmembrane helix</keyword>
<reference evidence="11" key="1">
    <citation type="journal article" date="1999" name="Glycobiology">
        <title>Genomic organization and promoter activity of glucosidase I gene.</title>
        <authorList>
            <person name="Khan F.A."/>
            <person name="Varma G.M."/>
            <person name="Vijay I.K."/>
        </authorList>
    </citation>
    <scope>NUCLEOTIDE SEQUENCE [GENOMIC DNA]</scope>
</reference>
<reference evidence="12" key="2">
    <citation type="journal article" date="2004" name="Genome Res.">
        <title>The status, quality, and expansion of the NIH full-length cDNA project: the Mammalian Gene Collection (MGC).</title>
        <authorList>
            <consortium name="The MGC Project Team"/>
        </authorList>
    </citation>
    <scope>NUCLEOTIDE SEQUENCE [LARGE SCALE MRNA]</scope>
    <source>
        <strain>C57BL/6J</strain>
        <tissue>Fetal brain</tissue>
    </source>
</reference>
<reference key="3">
    <citation type="journal article" date="2010" name="Cell">
        <title>A tissue-specific atlas of mouse protein phosphorylation and expression.</title>
        <authorList>
            <person name="Huttlin E.L."/>
            <person name="Jedrychowski M.P."/>
            <person name="Elias J.E."/>
            <person name="Goswami T."/>
            <person name="Rad R."/>
            <person name="Beausoleil S.A."/>
            <person name="Villen J."/>
            <person name="Haas W."/>
            <person name="Sowa M.E."/>
            <person name="Gygi S.P."/>
        </authorList>
    </citation>
    <scope>IDENTIFICATION BY MASS SPECTROMETRY [LARGE SCALE ANALYSIS]</scope>
    <source>
        <tissue>Brain</tissue>
        <tissue>Brown adipose tissue</tissue>
        <tissue>Heart</tissue>
        <tissue>Kidney</tissue>
        <tissue>Liver</tissue>
        <tissue>Lung</tissue>
        <tissue>Pancreas</tissue>
        <tissue>Spleen</tissue>
        <tissue>Testis</tissue>
    </source>
</reference>
<reference evidence="14" key="4">
    <citation type="journal article" date="2020" name="J. Med. Chem.">
        <title>Targeting endoplasmic reticulum alpha-glucosidase I with a single-dose iminosugar treatment protects against lethal Influenza and Dengue virus infections.</title>
        <authorList>
            <person name="Warfield K.L."/>
            <person name="Alonzi D.S."/>
            <person name="Hill J.C."/>
            <person name="Caputo A.T."/>
            <person name="Roversi P."/>
            <person name="Kiappes J.L."/>
            <person name="Sheets N."/>
            <person name="Duchars M."/>
            <person name="Dwek R.A."/>
            <person name="Biggins J."/>
            <person name="Barnard D."/>
            <person name="Shresta S."/>
            <person name="Treston A.M."/>
            <person name="Zitzmann N."/>
        </authorList>
    </citation>
    <scope>X-RAY CRYSTALLOGRAPHY (2.10 ANGSTROMS) OF 59-834 IN COMPLEX WITH A DEOXYNOJIRIMYCIN DERIVATIVE INHIBITOR</scope>
    <scope>FUNCTION (MICROBIAL INFECTION)</scope>
    <scope>ACTIVITY REGULATION</scope>
</reference>